<comment type="function">
    <text evidence="1">NDH shuttles electrons from NAD(P)H:plastoquinone, via FMN and iron-sulfur (Fe-S) centers, to quinones in the photosynthetic chain and possibly in a chloroplast respiratory chain. The immediate electron acceptor for the enzyme in this species is believed to be plastoquinone. Couples the redox reaction to proton translocation, and thus conserves the redox energy in a proton gradient (By similarity).</text>
</comment>
<comment type="catalytic activity">
    <reaction>
        <text>a plastoquinone + NADH + (n+1) H(+)(in) = a plastoquinol + NAD(+) + n H(+)(out)</text>
        <dbReference type="Rhea" id="RHEA:42608"/>
        <dbReference type="Rhea" id="RHEA-COMP:9561"/>
        <dbReference type="Rhea" id="RHEA-COMP:9562"/>
        <dbReference type="ChEBI" id="CHEBI:15378"/>
        <dbReference type="ChEBI" id="CHEBI:17757"/>
        <dbReference type="ChEBI" id="CHEBI:57540"/>
        <dbReference type="ChEBI" id="CHEBI:57945"/>
        <dbReference type="ChEBI" id="CHEBI:62192"/>
    </reaction>
</comment>
<comment type="catalytic activity">
    <reaction>
        <text>a plastoquinone + NADPH + (n+1) H(+)(in) = a plastoquinol + NADP(+) + n H(+)(out)</text>
        <dbReference type="Rhea" id="RHEA:42612"/>
        <dbReference type="Rhea" id="RHEA-COMP:9561"/>
        <dbReference type="Rhea" id="RHEA-COMP:9562"/>
        <dbReference type="ChEBI" id="CHEBI:15378"/>
        <dbReference type="ChEBI" id="CHEBI:17757"/>
        <dbReference type="ChEBI" id="CHEBI:57783"/>
        <dbReference type="ChEBI" id="CHEBI:58349"/>
        <dbReference type="ChEBI" id="CHEBI:62192"/>
    </reaction>
</comment>
<comment type="subunit">
    <text evidence="1">NDH is composed of at least 16 different subunits, 5 of which are encoded in the nucleus.</text>
</comment>
<comment type="subcellular location">
    <subcellularLocation>
        <location evidence="1">Plastid</location>
        <location evidence="1">Chloroplast thylakoid membrane</location>
        <topology evidence="1">Multi-pass membrane protein</topology>
    </subcellularLocation>
</comment>
<comment type="similarity">
    <text evidence="3">Belongs to the complex I subunit 6 family.</text>
</comment>
<evidence type="ECO:0000250" key="1"/>
<evidence type="ECO:0000255" key="2"/>
<evidence type="ECO:0000305" key="3"/>
<dbReference type="EC" id="7.1.1.-"/>
<dbReference type="EMBL" id="DQ354691">
    <property type="protein sequence ID" value="ABC60512.1"/>
    <property type="molecule type" value="Genomic_DNA"/>
</dbReference>
<dbReference type="RefSeq" id="YP_001001587.1">
    <property type="nucleotide sequence ID" value="NC_008788.1"/>
</dbReference>
<dbReference type="SMR" id="A1XG08"/>
<dbReference type="GeneID" id="4699607"/>
<dbReference type="GO" id="GO:0009535">
    <property type="term" value="C:chloroplast thylakoid membrane"/>
    <property type="evidence" value="ECO:0007669"/>
    <property type="project" value="UniProtKB-SubCell"/>
</dbReference>
<dbReference type="GO" id="GO:0008137">
    <property type="term" value="F:NADH dehydrogenase (ubiquinone) activity"/>
    <property type="evidence" value="ECO:0007669"/>
    <property type="project" value="InterPro"/>
</dbReference>
<dbReference type="GO" id="GO:0048038">
    <property type="term" value="F:quinone binding"/>
    <property type="evidence" value="ECO:0007669"/>
    <property type="project" value="UniProtKB-KW"/>
</dbReference>
<dbReference type="FunFam" id="1.20.120.1200:FF:000002">
    <property type="entry name" value="NAD(P)H-quinone oxidoreductase subunit 6, chloroplastic"/>
    <property type="match status" value="1"/>
</dbReference>
<dbReference type="Gene3D" id="1.20.120.1200">
    <property type="entry name" value="NADH-ubiquinone/plastoquinone oxidoreductase chain 6, subunit NuoJ"/>
    <property type="match status" value="1"/>
</dbReference>
<dbReference type="InterPro" id="IPR050290">
    <property type="entry name" value="NAD(P)H-Q_Oxidoreduct_6"/>
</dbReference>
<dbReference type="InterPro" id="IPR001457">
    <property type="entry name" value="NADH_UbQ/plastoQ_OxRdtase_su6"/>
</dbReference>
<dbReference type="InterPro" id="IPR042106">
    <property type="entry name" value="Nuo/plastoQ_OxRdtase_6_NuoJ"/>
</dbReference>
<dbReference type="PANTHER" id="PTHR48479">
    <property type="entry name" value="NAD(P)H-QUINONE OXIDOREDUCTASE SUBUNIT 6, CHLOROPLASTIC"/>
    <property type="match status" value="1"/>
</dbReference>
<dbReference type="PANTHER" id="PTHR48479:SF1">
    <property type="entry name" value="NAD(P)H-QUINONE OXIDOREDUCTASE SUBUNIT 6, CHLOROPLASTIC"/>
    <property type="match status" value="1"/>
</dbReference>
<dbReference type="Pfam" id="PF00499">
    <property type="entry name" value="Oxidored_q3"/>
    <property type="match status" value="1"/>
</dbReference>
<geneLocation type="chloroplast"/>
<keyword id="KW-0150">Chloroplast</keyword>
<keyword id="KW-0472">Membrane</keyword>
<keyword id="KW-0520">NAD</keyword>
<keyword id="KW-0521">NADP</keyword>
<keyword id="KW-0934">Plastid</keyword>
<keyword id="KW-0618">Plastoquinone</keyword>
<keyword id="KW-0874">Quinone</keyword>
<keyword id="KW-0793">Thylakoid</keyword>
<keyword id="KW-1278">Translocase</keyword>
<keyword id="KW-0812">Transmembrane</keyword>
<keyword id="KW-1133">Transmembrane helix</keyword>
<keyword id="KW-0813">Transport</keyword>
<reference key="1">
    <citation type="journal article" date="2007" name="BMC Genomics">
        <title>Comparative chloroplast genomics: analyses including new sequences from the angiosperms Nuphar advena and Ranunculus macranthus.</title>
        <authorList>
            <person name="Raubeson L.A."/>
            <person name="Peery R."/>
            <person name="Chumley T.W."/>
            <person name="Dziubek C."/>
            <person name="Fourcade H.M."/>
            <person name="Boore J.L."/>
            <person name="Jansen R.K."/>
        </authorList>
    </citation>
    <scope>NUCLEOTIDE SEQUENCE [LARGE SCALE GENOMIC DNA]</scope>
</reference>
<sequence length="177" mass="19369">MDLPAPIHDILLVSLGSGLIVGGLGVVLLTNPIYSAFSSGLVLVCISLFYIPSNSYFVAAAQLLIYVGAINVLILFAVMFMNGSEYYNSFHFWTIGDGFTSVVCTSIFFSLIATIPNTSWYGIIWTTRSNQIIEQDLTSNVQQIGIHLSTDFYLPFELISIILLVSLVGAIAMARRE</sequence>
<proteinExistence type="inferred from homology"/>
<name>NU6C_NUPAD</name>
<gene>
    <name type="primary">ndhG</name>
</gene>
<accession>A1XG08</accession>
<feature type="chain" id="PRO_0000360274" description="NAD(P)H-quinone oxidoreductase subunit 6, chloroplastic">
    <location>
        <begin position="1"/>
        <end position="177"/>
    </location>
</feature>
<feature type="transmembrane region" description="Helical" evidence="2">
    <location>
        <begin position="10"/>
        <end position="30"/>
    </location>
</feature>
<feature type="transmembrane region" description="Helical" evidence="2">
    <location>
        <begin position="32"/>
        <end position="52"/>
    </location>
</feature>
<feature type="transmembrane region" description="Helical" evidence="2">
    <location>
        <begin position="61"/>
        <end position="81"/>
    </location>
</feature>
<feature type="transmembrane region" description="Helical" evidence="2">
    <location>
        <begin position="92"/>
        <end position="112"/>
    </location>
</feature>
<feature type="transmembrane region" description="Helical" evidence="2">
    <location>
        <begin position="152"/>
        <end position="172"/>
    </location>
</feature>
<protein>
    <recommendedName>
        <fullName>NAD(P)H-quinone oxidoreductase subunit 6, chloroplastic</fullName>
        <ecNumber>7.1.1.-</ecNumber>
    </recommendedName>
    <alternativeName>
        <fullName>NAD(P)H dehydrogenase subunit 6</fullName>
    </alternativeName>
    <alternativeName>
        <fullName>NADH-plastoquinone oxidoreductase subunit 6</fullName>
    </alternativeName>
</protein>
<organism>
    <name type="scientific">Nuphar advena</name>
    <name type="common">Common spatterdock</name>
    <name type="synonym">Nuphar lutea subsp. advena</name>
    <dbReference type="NCBI Taxonomy" id="77108"/>
    <lineage>
        <taxon>Eukaryota</taxon>
        <taxon>Viridiplantae</taxon>
        <taxon>Streptophyta</taxon>
        <taxon>Embryophyta</taxon>
        <taxon>Tracheophyta</taxon>
        <taxon>Spermatophyta</taxon>
        <taxon>Magnoliopsida</taxon>
        <taxon>Nymphaeales</taxon>
        <taxon>Nymphaeaceae</taxon>
        <taxon>Nuphar</taxon>
    </lineage>
</organism>